<keyword id="KW-1185">Reference proteome</keyword>
<keyword id="KW-0687">Ribonucleoprotein</keyword>
<keyword id="KW-0689">Ribosomal protein</keyword>
<organism>
    <name type="scientific">Rhodospirillum centenum (strain ATCC 51521 / SW)</name>
    <dbReference type="NCBI Taxonomy" id="414684"/>
    <lineage>
        <taxon>Bacteria</taxon>
        <taxon>Pseudomonadati</taxon>
        <taxon>Pseudomonadota</taxon>
        <taxon>Alphaproteobacteria</taxon>
        <taxon>Rhodospirillales</taxon>
        <taxon>Rhodospirillaceae</taxon>
        <taxon>Rhodospirillum</taxon>
    </lineage>
</organism>
<evidence type="ECO:0000255" key="1">
    <source>
        <dbReference type="HAMAP-Rule" id="MF_00402"/>
    </source>
</evidence>
<evidence type="ECO:0000305" key="2"/>
<accession>B6IP95</accession>
<dbReference type="EMBL" id="CP000613">
    <property type="protein sequence ID" value="ACI99597.1"/>
    <property type="molecule type" value="Genomic_DNA"/>
</dbReference>
<dbReference type="RefSeq" id="WP_012567382.1">
    <property type="nucleotide sequence ID" value="NC_011420.2"/>
</dbReference>
<dbReference type="SMR" id="B6IP95"/>
<dbReference type="STRING" id="414684.RC1_2210"/>
<dbReference type="KEGG" id="rce:RC1_2210"/>
<dbReference type="eggNOG" id="COG0335">
    <property type="taxonomic scope" value="Bacteria"/>
</dbReference>
<dbReference type="HOGENOM" id="CLU_103507_2_1_5"/>
<dbReference type="OrthoDB" id="9803541at2"/>
<dbReference type="Proteomes" id="UP000001591">
    <property type="component" value="Chromosome"/>
</dbReference>
<dbReference type="GO" id="GO:0022625">
    <property type="term" value="C:cytosolic large ribosomal subunit"/>
    <property type="evidence" value="ECO:0007669"/>
    <property type="project" value="TreeGrafter"/>
</dbReference>
<dbReference type="GO" id="GO:0003735">
    <property type="term" value="F:structural constituent of ribosome"/>
    <property type="evidence" value="ECO:0007669"/>
    <property type="project" value="InterPro"/>
</dbReference>
<dbReference type="GO" id="GO:0006412">
    <property type="term" value="P:translation"/>
    <property type="evidence" value="ECO:0007669"/>
    <property type="project" value="UniProtKB-UniRule"/>
</dbReference>
<dbReference type="FunFam" id="2.30.30.790:FF:000001">
    <property type="entry name" value="50S ribosomal protein L19"/>
    <property type="match status" value="1"/>
</dbReference>
<dbReference type="Gene3D" id="2.30.30.790">
    <property type="match status" value="1"/>
</dbReference>
<dbReference type="HAMAP" id="MF_00402">
    <property type="entry name" value="Ribosomal_bL19"/>
    <property type="match status" value="1"/>
</dbReference>
<dbReference type="InterPro" id="IPR001857">
    <property type="entry name" value="Ribosomal_bL19"/>
</dbReference>
<dbReference type="InterPro" id="IPR018257">
    <property type="entry name" value="Ribosomal_bL19_CS"/>
</dbReference>
<dbReference type="InterPro" id="IPR038657">
    <property type="entry name" value="Ribosomal_bL19_sf"/>
</dbReference>
<dbReference type="InterPro" id="IPR008991">
    <property type="entry name" value="Translation_prot_SH3-like_sf"/>
</dbReference>
<dbReference type="NCBIfam" id="TIGR01024">
    <property type="entry name" value="rplS_bact"/>
    <property type="match status" value="1"/>
</dbReference>
<dbReference type="PANTHER" id="PTHR15680:SF9">
    <property type="entry name" value="LARGE RIBOSOMAL SUBUNIT PROTEIN BL19M"/>
    <property type="match status" value="1"/>
</dbReference>
<dbReference type="PANTHER" id="PTHR15680">
    <property type="entry name" value="RIBOSOMAL PROTEIN L19"/>
    <property type="match status" value="1"/>
</dbReference>
<dbReference type="Pfam" id="PF01245">
    <property type="entry name" value="Ribosomal_L19"/>
    <property type="match status" value="1"/>
</dbReference>
<dbReference type="PIRSF" id="PIRSF002191">
    <property type="entry name" value="Ribosomal_L19"/>
    <property type="match status" value="1"/>
</dbReference>
<dbReference type="PRINTS" id="PR00061">
    <property type="entry name" value="RIBOSOMALL19"/>
</dbReference>
<dbReference type="SUPFAM" id="SSF50104">
    <property type="entry name" value="Translation proteins SH3-like domain"/>
    <property type="match status" value="1"/>
</dbReference>
<dbReference type="PROSITE" id="PS01015">
    <property type="entry name" value="RIBOSOMAL_L19"/>
    <property type="match status" value="1"/>
</dbReference>
<reference key="1">
    <citation type="submission" date="2007-03" db="EMBL/GenBank/DDBJ databases">
        <title>Genome sequence of Rhodospirillum centenum.</title>
        <authorList>
            <person name="Touchman J.W."/>
            <person name="Bauer C."/>
            <person name="Blankenship R.E."/>
        </authorList>
    </citation>
    <scope>NUCLEOTIDE SEQUENCE [LARGE SCALE GENOMIC DNA]</scope>
    <source>
        <strain>ATCC 51521 / SW</strain>
    </source>
</reference>
<protein>
    <recommendedName>
        <fullName evidence="1">Large ribosomal subunit protein bL19</fullName>
    </recommendedName>
    <alternativeName>
        <fullName evidence="2">50S ribosomal protein L19</fullName>
    </alternativeName>
</protein>
<comment type="function">
    <text evidence="1">This protein is located at the 30S-50S ribosomal subunit interface and may play a role in the structure and function of the aminoacyl-tRNA binding site.</text>
</comment>
<comment type="similarity">
    <text evidence="1">Belongs to the bacterial ribosomal protein bL19 family.</text>
</comment>
<name>RL19_RHOCS</name>
<proteinExistence type="inferred from homology"/>
<feature type="chain" id="PRO_1000193874" description="Large ribosomal subunit protein bL19">
    <location>
        <begin position="1"/>
        <end position="132"/>
    </location>
</feature>
<gene>
    <name evidence="1" type="primary">rplS</name>
    <name type="ordered locus">RC1_2210</name>
</gene>
<sequence>MNILQQLEQEQVAKLTAGKTIPAFSPGDTVRVNVKVVEGTRERVQAYEGVVIARKNAGLNSSFTVRKISYGEGVERVFPLYSPRIDSVELVRKGDVRRAKLYYLRGRTGKSARIAERTTGHGITKKDTGSEG</sequence>